<comment type="function">
    <text evidence="1">Catalyzes xyloglucan endohydrolysis (XEH) and/or endotransglycosylation (XET). Cleaves and religates xyloglucan polymers, an essential constituent of the primary cell wall, and thereby participates in cell wall construction of growing tissues (By similarity).</text>
</comment>
<comment type="catalytic activity">
    <reaction>
        <text>breaks a beta-(1-&gt;4) bond in the backbone of a xyloglucan and transfers the xyloglucanyl segment on to O-4 of the non-reducing terminal glucose residue of an acceptor, which can be a xyloglucan or an oligosaccharide of xyloglucan.</text>
        <dbReference type="EC" id="2.4.1.207"/>
    </reaction>
</comment>
<comment type="subcellular location">
    <subcellularLocation>
        <location evidence="7">Secreted</location>
        <location evidence="7">Cell wall</location>
    </subcellularLocation>
    <subcellularLocation>
        <location evidence="7">Secreted</location>
        <location evidence="7">Extracellular space</location>
        <location evidence="7">Apoplast</location>
    </subcellularLocation>
</comment>
<comment type="tissue specificity">
    <text evidence="6">Predominantly expressed in green siliques.</text>
</comment>
<comment type="PTM">
    <text evidence="1">Contains at least one intrachain disulfide bond essential for its enzymatic activity.</text>
</comment>
<comment type="miscellaneous">
    <text>In contrast to group 1 and group 2 endotransglucosylase/hydrolase proteins, it may not contain the ligase activity, and may catalyze endohydrolysis xyloglucan polymers only.</text>
</comment>
<comment type="similarity">
    <text evidence="7">Belongs to the glycosyl hydrolase 16 family. XTH group 3 subfamily.</text>
</comment>
<feature type="signal peptide" evidence="3">
    <location>
        <begin position="1"/>
        <end position="23"/>
    </location>
</feature>
<feature type="chain" id="PRO_0000011830" description="Probable xyloglucan endotransglucosylase/hydrolase protein 30">
    <location>
        <begin position="24"/>
        <end position="343"/>
    </location>
</feature>
<feature type="domain" description="GH16" evidence="4">
    <location>
        <begin position="24"/>
        <end position="224"/>
    </location>
</feature>
<feature type="region of interest" description="Disordered" evidence="5">
    <location>
        <begin position="306"/>
        <end position="343"/>
    </location>
</feature>
<feature type="active site" description="Nucleophile" evidence="2">
    <location>
        <position position="109"/>
    </location>
</feature>
<feature type="active site" description="Proton donor" evidence="2">
    <location>
        <position position="113"/>
    </location>
</feature>
<feature type="binding site" evidence="2">
    <location>
        <position position="113"/>
    </location>
    <ligand>
        <name>xyloglucan</name>
        <dbReference type="ChEBI" id="CHEBI:18233"/>
    </ligand>
</feature>
<feature type="binding site" evidence="2">
    <location>
        <begin position="126"/>
        <end position="128"/>
    </location>
    <ligand>
        <name>xyloglucan</name>
        <dbReference type="ChEBI" id="CHEBI:18233"/>
    </ligand>
</feature>
<feature type="binding site" evidence="2">
    <location>
        <begin position="136"/>
        <end position="140"/>
    </location>
    <ligand>
        <name>xyloglucan</name>
        <dbReference type="ChEBI" id="CHEBI:18233"/>
    </ligand>
</feature>
<feature type="binding site" evidence="2">
    <location>
        <begin position="203"/>
        <end position="204"/>
    </location>
    <ligand>
        <name>xyloglucan</name>
        <dbReference type="ChEBI" id="CHEBI:18233"/>
    </ligand>
</feature>
<feature type="binding site" evidence="2">
    <location>
        <position position="208"/>
    </location>
    <ligand>
        <name>xyloglucan</name>
        <dbReference type="ChEBI" id="CHEBI:18233"/>
    </ligand>
</feature>
<feature type="binding site" evidence="2">
    <location>
        <position position="285"/>
    </location>
    <ligand>
        <name>xyloglucan</name>
        <dbReference type="ChEBI" id="CHEBI:18233"/>
    </ligand>
</feature>
<feature type="site" description="Important for catalytic activity" evidence="2">
    <location>
        <position position="111"/>
    </location>
</feature>
<feature type="glycosylation site" description="N-linked (GlcNAc...) asparagine" evidence="3">
    <location>
        <position position="132"/>
    </location>
</feature>
<feature type="disulfide bond" evidence="2">
    <location>
        <begin position="280"/>
        <end position="293"/>
    </location>
</feature>
<feature type="sequence conflict" description="In Ref. 4; AAM67311." evidence="7" ref="4">
    <original>S</original>
    <variation>F</variation>
    <location>
        <position position="202"/>
    </location>
</feature>
<organism>
    <name type="scientific">Arabidopsis thaliana</name>
    <name type="common">Mouse-ear cress</name>
    <dbReference type="NCBI Taxonomy" id="3702"/>
    <lineage>
        <taxon>Eukaryota</taxon>
        <taxon>Viridiplantae</taxon>
        <taxon>Streptophyta</taxon>
        <taxon>Embryophyta</taxon>
        <taxon>Tracheophyta</taxon>
        <taxon>Spermatophyta</taxon>
        <taxon>Magnoliopsida</taxon>
        <taxon>eudicotyledons</taxon>
        <taxon>Gunneridae</taxon>
        <taxon>Pentapetalae</taxon>
        <taxon>rosids</taxon>
        <taxon>malvids</taxon>
        <taxon>Brassicales</taxon>
        <taxon>Brassicaceae</taxon>
        <taxon>Camelineae</taxon>
        <taxon>Arabidopsis</taxon>
    </lineage>
</organism>
<reference key="1">
    <citation type="journal article" date="2000" name="Nature">
        <title>Sequence and analysis of chromosome 1 of the plant Arabidopsis thaliana.</title>
        <authorList>
            <person name="Theologis A."/>
            <person name="Ecker J.R."/>
            <person name="Palm C.J."/>
            <person name="Federspiel N.A."/>
            <person name="Kaul S."/>
            <person name="White O."/>
            <person name="Alonso J."/>
            <person name="Altafi H."/>
            <person name="Araujo R."/>
            <person name="Bowman C.L."/>
            <person name="Brooks S.Y."/>
            <person name="Buehler E."/>
            <person name="Chan A."/>
            <person name="Chao Q."/>
            <person name="Chen H."/>
            <person name="Cheuk R.F."/>
            <person name="Chin C.W."/>
            <person name="Chung M.K."/>
            <person name="Conn L."/>
            <person name="Conway A.B."/>
            <person name="Conway A.R."/>
            <person name="Creasy T.H."/>
            <person name="Dewar K."/>
            <person name="Dunn P."/>
            <person name="Etgu P."/>
            <person name="Feldblyum T.V."/>
            <person name="Feng J.-D."/>
            <person name="Fong B."/>
            <person name="Fujii C.Y."/>
            <person name="Gill J.E."/>
            <person name="Goldsmith A.D."/>
            <person name="Haas B."/>
            <person name="Hansen N.F."/>
            <person name="Hughes B."/>
            <person name="Huizar L."/>
            <person name="Hunter J.L."/>
            <person name="Jenkins J."/>
            <person name="Johnson-Hopson C."/>
            <person name="Khan S."/>
            <person name="Khaykin E."/>
            <person name="Kim C.J."/>
            <person name="Koo H.L."/>
            <person name="Kremenetskaia I."/>
            <person name="Kurtz D.B."/>
            <person name="Kwan A."/>
            <person name="Lam B."/>
            <person name="Langin-Hooper S."/>
            <person name="Lee A."/>
            <person name="Lee J.M."/>
            <person name="Lenz C.A."/>
            <person name="Li J.H."/>
            <person name="Li Y.-P."/>
            <person name="Lin X."/>
            <person name="Liu S.X."/>
            <person name="Liu Z.A."/>
            <person name="Luros J.S."/>
            <person name="Maiti R."/>
            <person name="Marziali A."/>
            <person name="Militscher J."/>
            <person name="Miranda M."/>
            <person name="Nguyen M."/>
            <person name="Nierman W.C."/>
            <person name="Osborne B.I."/>
            <person name="Pai G."/>
            <person name="Peterson J."/>
            <person name="Pham P.K."/>
            <person name="Rizzo M."/>
            <person name="Rooney T."/>
            <person name="Rowley D."/>
            <person name="Sakano H."/>
            <person name="Salzberg S.L."/>
            <person name="Schwartz J.R."/>
            <person name="Shinn P."/>
            <person name="Southwick A.M."/>
            <person name="Sun H."/>
            <person name="Tallon L.J."/>
            <person name="Tambunga G."/>
            <person name="Toriumi M.J."/>
            <person name="Town C.D."/>
            <person name="Utterback T."/>
            <person name="Van Aken S."/>
            <person name="Vaysberg M."/>
            <person name="Vysotskaia V.S."/>
            <person name="Walker M."/>
            <person name="Wu D."/>
            <person name="Yu G."/>
            <person name="Fraser C.M."/>
            <person name="Venter J.C."/>
            <person name="Davis R.W."/>
        </authorList>
    </citation>
    <scope>NUCLEOTIDE SEQUENCE [LARGE SCALE GENOMIC DNA]</scope>
    <source>
        <strain>cv. Columbia</strain>
    </source>
</reference>
<reference key="2">
    <citation type="journal article" date="2017" name="Plant J.">
        <title>Araport11: a complete reannotation of the Arabidopsis thaliana reference genome.</title>
        <authorList>
            <person name="Cheng C.Y."/>
            <person name="Krishnakumar V."/>
            <person name="Chan A.P."/>
            <person name="Thibaud-Nissen F."/>
            <person name="Schobel S."/>
            <person name="Town C.D."/>
        </authorList>
    </citation>
    <scope>GENOME REANNOTATION</scope>
    <source>
        <strain>cv. Columbia</strain>
    </source>
</reference>
<reference key="3">
    <citation type="journal article" date="2003" name="Science">
        <title>Empirical analysis of transcriptional activity in the Arabidopsis genome.</title>
        <authorList>
            <person name="Yamada K."/>
            <person name="Lim J."/>
            <person name="Dale J.M."/>
            <person name="Chen H."/>
            <person name="Shinn P."/>
            <person name="Palm C.J."/>
            <person name="Southwick A.M."/>
            <person name="Wu H.C."/>
            <person name="Kim C.J."/>
            <person name="Nguyen M."/>
            <person name="Pham P.K."/>
            <person name="Cheuk R.F."/>
            <person name="Karlin-Newmann G."/>
            <person name="Liu S.X."/>
            <person name="Lam B."/>
            <person name="Sakano H."/>
            <person name="Wu T."/>
            <person name="Yu G."/>
            <person name="Miranda M."/>
            <person name="Quach H.L."/>
            <person name="Tripp M."/>
            <person name="Chang C.H."/>
            <person name="Lee J.M."/>
            <person name="Toriumi M.J."/>
            <person name="Chan M.M."/>
            <person name="Tang C.C."/>
            <person name="Onodera C.S."/>
            <person name="Deng J.M."/>
            <person name="Akiyama K."/>
            <person name="Ansari Y."/>
            <person name="Arakawa T."/>
            <person name="Banh J."/>
            <person name="Banno F."/>
            <person name="Bowser L."/>
            <person name="Brooks S.Y."/>
            <person name="Carninci P."/>
            <person name="Chao Q."/>
            <person name="Choy N."/>
            <person name="Enju A."/>
            <person name="Goldsmith A.D."/>
            <person name="Gurjal M."/>
            <person name="Hansen N.F."/>
            <person name="Hayashizaki Y."/>
            <person name="Johnson-Hopson C."/>
            <person name="Hsuan V.W."/>
            <person name="Iida K."/>
            <person name="Karnes M."/>
            <person name="Khan S."/>
            <person name="Koesema E."/>
            <person name="Ishida J."/>
            <person name="Jiang P.X."/>
            <person name="Jones T."/>
            <person name="Kawai J."/>
            <person name="Kamiya A."/>
            <person name="Meyers C."/>
            <person name="Nakajima M."/>
            <person name="Narusaka M."/>
            <person name="Seki M."/>
            <person name="Sakurai T."/>
            <person name="Satou M."/>
            <person name="Tamse R."/>
            <person name="Vaysberg M."/>
            <person name="Wallender E.K."/>
            <person name="Wong C."/>
            <person name="Yamamura Y."/>
            <person name="Yuan S."/>
            <person name="Shinozaki K."/>
            <person name="Davis R.W."/>
            <person name="Theologis A."/>
            <person name="Ecker J.R."/>
        </authorList>
    </citation>
    <scope>NUCLEOTIDE SEQUENCE [LARGE SCALE MRNA]</scope>
    <source>
        <strain>cv. Columbia</strain>
    </source>
</reference>
<reference key="4">
    <citation type="submission" date="2002-03" db="EMBL/GenBank/DDBJ databases">
        <title>Full-length cDNA from Arabidopsis thaliana.</title>
        <authorList>
            <person name="Brover V.V."/>
            <person name="Troukhan M.E."/>
            <person name="Alexandrov N.A."/>
            <person name="Lu Y.-P."/>
            <person name="Flavell R.B."/>
            <person name="Feldmann K.A."/>
        </authorList>
    </citation>
    <scope>NUCLEOTIDE SEQUENCE [LARGE SCALE MRNA]</scope>
</reference>
<reference key="5">
    <citation type="journal article" date="1996" name="Plant J.">
        <title>The Arabidopsis XET-related gene family: environmental and hormonal regulation of expression.</title>
        <authorList>
            <person name="Xu W."/>
            <person name="Campbell P."/>
            <person name="Vargheese A.K."/>
            <person name="Braam J."/>
        </authorList>
    </citation>
    <scope>NUCLEOTIDE SEQUENCE [MRNA] OF 3-343</scope>
    <source>
        <strain>cv. Columbia</strain>
    </source>
</reference>
<reference key="6">
    <citation type="journal article" date="2001" name="Plant Cell Physiol.">
        <title>A comprehensive expression analysis of all members of a gene family encoding cell-wall enzymes allowed us to predict cis-regulatory regions involved in cell-wall construction in specific organs of Arabidopsis.</title>
        <authorList>
            <person name="Yokoyama R."/>
            <person name="Nishitani K."/>
        </authorList>
    </citation>
    <scope>TISSUE SPECIFICITY</scope>
</reference>
<reference key="7">
    <citation type="journal article" date="2002" name="Plant Cell Physiol.">
        <title>The XTH family of enzymes involved in xyloglucan endotransglucosylation and endohydrolysis: current perspectives and a new unifying nomenclature.</title>
        <authorList>
            <person name="Rose J.K.C."/>
            <person name="Braam J."/>
            <person name="Fry S.C."/>
            <person name="Nishitani K."/>
        </authorList>
    </citation>
    <scope>NOMENCLATURE</scope>
</reference>
<accession>Q38908</accession>
<accession>Q8LDA9</accession>
<accession>Q9FVR2</accession>
<protein>
    <recommendedName>
        <fullName>Probable xyloglucan endotransglucosylase/hydrolase protein 30</fullName>
        <shortName>At-XTH30</shortName>
        <shortName>XTH-30</shortName>
        <ecNumber>2.4.1.207</ecNumber>
    </recommendedName>
</protein>
<sequence length="343" mass="39888">MSKSSYNHIFILILCLCLRSSSAFTNLNTLSFEESLSPLFGDANLVRSPDDLSVRLLLDRYTGSGFISSNMYQHGFYSSMIKLPADYTAGVVVAFYTSNGDVFEKTHDELDIEFLGNIKGKPWRFQTNLYGNGSTHRGREERYRLWFDPSKEFHRYSILWTPHKIIFWVDDVPIREVIRNDAMGADYPAKPMALYATIWDASDWATSGGKYKANYKFAPFVAEFKSFSLDGCSVDPIQEVPMDCSDSVDFLESQDYSSINSHQRAAMRRFRQRFMYYSYCYDTLRYPEPLPECVIVPAEKDRFKETGRLKFGGTEARERRRNRRQQRRPEIEIESDPDDRKLL</sequence>
<evidence type="ECO:0000250" key="1"/>
<evidence type="ECO:0000250" key="2">
    <source>
        <dbReference type="UniProtKB" id="Q8GZD5"/>
    </source>
</evidence>
<evidence type="ECO:0000255" key="3"/>
<evidence type="ECO:0000255" key="4">
    <source>
        <dbReference type="PROSITE-ProRule" id="PRU01098"/>
    </source>
</evidence>
<evidence type="ECO:0000256" key="5">
    <source>
        <dbReference type="SAM" id="MobiDB-lite"/>
    </source>
</evidence>
<evidence type="ECO:0000269" key="6">
    <source>
    </source>
</evidence>
<evidence type="ECO:0000305" key="7"/>
<gene>
    <name type="primary">XTH30</name>
    <name type="synonym">XTR4</name>
    <name type="ordered locus">At1g32170</name>
    <name type="ORF">F3C3.5</name>
</gene>
<proteinExistence type="evidence at transcript level"/>
<keyword id="KW-0052">Apoplast</keyword>
<keyword id="KW-0134">Cell wall</keyword>
<keyword id="KW-0961">Cell wall biogenesis/degradation</keyword>
<keyword id="KW-1015">Disulfide bond</keyword>
<keyword id="KW-0325">Glycoprotein</keyword>
<keyword id="KW-0326">Glycosidase</keyword>
<keyword id="KW-0378">Hydrolase</keyword>
<keyword id="KW-1185">Reference proteome</keyword>
<keyword id="KW-0964">Secreted</keyword>
<keyword id="KW-0732">Signal</keyword>
<keyword id="KW-0808">Transferase</keyword>
<dbReference type="EC" id="2.4.1.207"/>
<dbReference type="EMBL" id="AC084165">
    <property type="protein sequence ID" value="AAG23439.1"/>
    <property type="molecule type" value="Genomic_DNA"/>
</dbReference>
<dbReference type="EMBL" id="CP002684">
    <property type="protein sequence ID" value="AEE31443.1"/>
    <property type="molecule type" value="Genomic_DNA"/>
</dbReference>
<dbReference type="EMBL" id="AY062698">
    <property type="protein sequence ID" value="AAL32776.1"/>
    <property type="molecule type" value="mRNA"/>
</dbReference>
<dbReference type="EMBL" id="AY086104">
    <property type="protein sequence ID" value="AAM67311.1"/>
    <property type="molecule type" value="mRNA"/>
</dbReference>
<dbReference type="EMBL" id="U43486">
    <property type="protein sequence ID" value="AAB18365.1"/>
    <property type="molecule type" value="mRNA"/>
</dbReference>
<dbReference type="PIR" id="B86446">
    <property type="entry name" value="B86446"/>
</dbReference>
<dbReference type="PIR" id="S71223">
    <property type="entry name" value="S71223"/>
</dbReference>
<dbReference type="RefSeq" id="NP_174496.1">
    <property type="nucleotide sequence ID" value="NM_102950.4"/>
</dbReference>
<dbReference type="SMR" id="Q38908"/>
<dbReference type="STRING" id="3702.Q38908"/>
<dbReference type="CAZy" id="GH16">
    <property type="family name" value="Glycoside Hydrolase Family 16"/>
</dbReference>
<dbReference type="GlyCosmos" id="Q38908">
    <property type="glycosylation" value="1 site, No reported glycans"/>
</dbReference>
<dbReference type="GlyGen" id="Q38908">
    <property type="glycosylation" value="1 site"/>
</dbReference>
<dbReference type="PaxDb" id="3702-AT1G32170.1"/>
<dbReference type="ProteomicsDB" id="242793"/>
<dbReference type="EnsemblPlants" id="AT1G32170.1">
    <property type="protein sequence ID" value="AT1G32170.1"/>
    <property type="gene ID" value="AT1G32170"/>
</dbReference>
<dbReference type="GeneID" id="840109"/>
<dbReference type="Gramene" id="AT1G32170.1">
    <property type="protein sequence ID" value="AT1G32170.1"/>
    <property type="gene ID" value="AT1G32170"/>
</dbReference>
<dbReference type="KEGG" id="ath:AT1G32170"/>
<dbReference type="Araport" id="AT1G32170"/>
<dbReference type="TAIR" id="AT1G32170">
    <property type="gene designation" value="XTH30"/>
</dbReference>
<dbReference type="eggNOG" id="ENOG502QURN">
    <property type="taxonomic scope" value="Eukaryota"/>
</dbReference>
<dbReference type="HOGENOM" id="CLU_048041_1_2_1"/>
<dbReference type="InParanoid" id="Q38908"/>
<dbReference type="OMA" id="NIAGKPW"/>
<dbReference type="PhylomeDB" id="Q38908"/>
<dbReference type="BioCyc" id="ARA:AT1G32170-MONOMER"/>
<dbReference type="BRENDA" id="2.4.1.207">
    <property type="organism ID" value="399"/>
</dbReference>
<dbReference type="PRO" id="PR:Q38908"/>
<dbReference type="Proteomes" id="UP000006548">
    <property type="component" value="Chromosome 1"/>
</dbReference>
<dbReference type="ExpressionAtlas" id="Q38908">
    <property type="expression patterns" value="baseline and differential"/>
</dbReference>
<dbReference type="GO" id="GO:0048046">
    <property type="term" value="C:apoplast"/>
    <property type="evidence" value="ECO:0007669"/>
    <property type="project" value="UniProtKB-SubCell"/>
</dbReference>
<dbReference type="GO" id="GO:0004553">
    <property type="term" value="F:hydrolase activity, hydrolyzing O-glycosyl compounds"/>
    <property type="evidence" value="ECO:0007669"/>
    <property type="project" value="InterPro"/>
</dbReference>
<dbReference type="GO" id="GO:0030247">
    <property type="term" value="F:polysaccharide binding"/>
    <property type="evidence" value="ECO:0000250"/>
    <property type="project" value="UniProtKB"/>
</dbReference>
<dbReference type="GO" id="GO:0016762">
    <property type="term" value="F:xyloglucan:xyloglucosyl transferase activity"/>
    <property type="evidence" value="ECO:0007669"/>
    <property type="project" value="UniProtKB-EC"/>
</dbReference>
<dbReference type="GO" id="GO:0042546">
    <property type="term" value="P:cell wall biogenesis"/>
    <property type="evidence" value="ECO:0007669"/>
    <property type="project" value="InterPro"/>
</dbReference>
<dbReference type="GO" id="GO:0071555">
    <property type="term" value="P:cell wall organization"/>
    <property type="evidence" value="ECO:0007669"/>
    <property type="project" value="UniProtKB-KW"/>
</dbReference>
<dbReference type="GO" id="GO:0010411">
    <property type="term" value="P:xyloglucan metabolic process"/>
    <property type="evidence" value="ECO:0007669"/>
    <property type="project" value="InterPro"/>
</dbReference>
<dbReference type="CDD" id="cd02176">
    <property type="entry name" value="GH16_XET"/>
    <property type="match status" value="1"/>
</dbReference>
<dbReference type="Gene3D" id="2.60.120.200">
    <property type="match status" value="1"/>
</dbReference>
<dbReference type="InterPro" id="IPR044791">
    <property type="entry name" value="Beta-glucanase/XTH"/>
</dbReference>
<dbReference type="InterPro" id="IPR013320">
    <property type="entry name" value="ConA-like_dom_sf"/>
</dbReference>
<dbReference type="InterPro" id="IPR000757">
    <property type="entry name" value="GH16"/>
</dbReference>
<dbReference type="InterPro" id="IPR010713">
    <property type="entry name" value="XET_C"/>
</dbReference>
<dbReference type="InterPro" id="IPR016455">
    <property type="entry name" value="XTH"/>
</dbReference>
<dbReference type="PANTHER" id="PTHR31062">
    <property type="entry name" value="XYLOGLUCAN ENDOTRANSGLUCOSYLASE/HYDROLASE PROTEIN 8-RELATED"/>
    <property type="match status" value="1"/>
</dbReference>
<dbReference type="Pfam" id="PF00722">
    <property type="entry name" value="Glyco_hydro_16"/>
    <property type="match status" value="1"/>
</dbReference>
<dbReference type="Pfam" id="PF06955">
    <property type="entry name" value="XET_C"/>
    <property type="match status" value="1"/>
</dbReference>
<dbReference type="PIRSF" id="PIRSF005604">
    <property type="entry name" value="XET"/>
    <property type="match status" value="1"/>
</dbReference>
<dbReference type="SUPFAM" id="SSF49899">
    <property type="entry name" value="Concanavalin A-like lectins/glucanases"/>
    <property type="match status" value="1"/>
</dbReference>
<dbReference type="PROSITE" id="PS51762">
    <property type="entry name" value="GH16_2"/>
    <property type="match status" value="1"/>
</dbReference>
<name>XTH30_ARATH</name>